<protein>
    <recommendedName>
        <fullName evidence="1">Quinolinate synthase</fullName>
        <ecNumber evidence="1">2.5.1.72</ecNumber>
    </recommendedName>
</protein>
<feature type="chain" id="PRO_1000129410" description="Quinolinate synthase">
    <location>
        <begin position="1"/>
        <end position="347"/>
    </location>
</feature>
<feature type="binding site" evidence="1">
    <location>
        <position position="47"/>
    </location>
    <ligand>
        <name>iminosuccinate</name>
        <dbReference type="ChEBI" id="CHEBI:77875"/>
    </ligand>
</feature>
<feature type="binding site" evidence="1">
    <location>
        <position position="68"/>
    </location>
    <ligand>
        <name>iminosuccinate</name>
        <dbReference type="ChEBI" id="CHEBI:77875"/>
    </ligand>
</feature>
<feature type="binding site" evidence="1">
    <location>
        <position position="113"/>
    </location>
    <ligand>
        <name>[4Fe-4S] cluster</name>
        <dbReference type="ChEBI" id="CHEBI:49883"/>
    </ligand>
</feature>
<feature type="binding site" evidence="1">
    <location>
        <begin position="139"/>
        <end position="141"/>
    </location>
    <ligand>
        <name>iminosuccinate</name>
        <dbReference type="ChEBI" id="CHEBI:77875"/>
    </ligand>
</feature>
<feature type="binding site" evidence="1">
    <location>
        <position position="156"/>
    </location>
    <ligand>
        <name>iminosuccinate</name>
        <dbReference type="ChEBI" id="CHEBI:77875"/>
    </ligand>
</feature>
<feature type="binding site" evidence="1">
    <location>
        <position position="200"/>
    </location>
    <ligand>
        <name>[4Fe-4S] cluster</name>
        <dbReference type="ChEBI" id="CHEBI:49883"/>
    </ligand>
</feature>
<feature type="binding site" evidence="1">
    <location>
        <begin position="226"/>
        <end position="228"/>
    </location>
    <ligand>
        <name>iminosuccinate</name>
        <dbReference type="ChEBI" id="CHEBI:77875"/>
    </ligand>
</feature>
<feature type="binding site" evidence="1">
    <location>
        <position position="243"/>
    </location>
    <ligand>
        <name>iminosuccinate</name>
        <dbReference type="ChEBI" id="CHEBI:77875"/>
    </ligand>
</feature>
<feature type="binding site" evidence="1">
    <location>
        <position position="297"/>
    </location>
    <ligand>
        <name>[4Fe-4S] cluster</name>
        <dbReference type="ChEBI" id="CHEBI:49883"/>
    </ligand>
</feature>
<comment type="function">
    <text evidence="1">Catalyzes the condensation of iminoaspartate with dihydroxyacetone phosphate to form quinolinate.</text>
</comment>
<comment type="catalytic activity">
    <reaction evidence="1">
        <text>iminosuccinate + dihydroxyacetone phosphate = quinolinate + phosphate + 2 H2O + H(+)</text>
        <dbReference type="Rhea" id="RHEA:25888"/>
        <dbReference type="ChEBI" id="CHEBI:15377"/>
        <dbReference type="ChEBI" id="CHEBI:15378"/>
        <dbReference type="ChEBI" id="CHEBI:29959"/>
        <dbReference type="ChEBI" id="CHEBI:43474"/>
        <dbReference type="ChEBI" id="CHEBI:57642"/>
        <dbReference type="ChEBI" id="CHEBI:77875"/>
        <dbReference type="EC" id="2.5.1.72"/>
    </reaction>
    <physiologicalReaction direction="left-to-right" evidence="1">
        <dbReference type="Rhea" id="RHEA:25889"/>
    </physiologicalReaction>
</comment>
<comment type="cofactor">
    <cofactor evidence="1">
        <name>[4Fe-4S] cluster</name>
        <dbReference type="ChEBI" id="CHEBI:49883"/>
    </cofactor>
    <text evidence="1">Binds 1 [4Fe-4S] cluster per subunit.</text>
</comment>
<comment type="pathway">
    <text evidence="1">Cofactor biosynthesis; NAD(+) biosynthesis; quinolinate from iminoaspartate: step 1/1.</text>
</comment>
<comment type="subcellular location">
    <subcellularLocation>
        <location evidence="1">Cytoplasm</location>
    </subcellularLocation>
</comment>
<comment type="similarity">
    <text evidence="1">Belongs to the quinolinate synthase family. Type 1 subfamily.</text>
</comment>
<proteinExistence type="inferred from homology"/>
<name>NADA_ECO45</name>
<organism>
    <name type="scientific">Escherichia coli O45:K1 (strain S88 / ExPEC)</name>
    <dbReference type="NCBI Taxonomy" id="585035"/>
    <lineage>
        <taxon>Bacteria</taxon>
        <taxon>Pseudomonadati</taxon>
        <taxon>Pseudomonadota</taxon>
        <taxon>Gammaproteobacteria</taxon>
        <taxon>Enterobacterales</taxon>
        <taxon>Enterobacteriaceae</taxon>
        <taxon>Escherichia</taxon>
    </lineage>
</organism>
<accession>B7MGK7</accession>
<reference key="1">
    <citation type="journal article" date="2009" name="PLoS Genet.">
        <title>Organised genome dynamics in the Escherichia coli species results in highly diverse adaptive paths.</title>
        <authorList>
            <person name="Touchon M."/>
            <person name="Hoede C."/>
            <person name="Tenaillon O."/>
            <person name="Barbe V."/>
            <person name="Baeriswyl S."/>
            <person name="Bidet P."/>
            <person name="Bingen E."/>
            <person name="Bonacorsi S."/>
            <person name="Bouchier C."/>
            <person name="Bouvet O."/>
            <person name="Calteau A."/>
            <person name="Chiapello H."/>
            <person name="Clermont O."/>
            <person name="Cruveiller S."/>
            <person name="Danchin A."/>
            <person name="Diard M."/>
            <person name="Dossat C."/>
            <person name="Karoui M.E."/>
            <person name="Frapy E."/>
            <person name="Garry L."/>
            <person name="Ghigo J.M."/>
            <person name="Gilles A.M."/>
            <person name="Johnson J."/>
            <person name="Le Bouguenec C."/>
            <person name="Lescat M."/>
            <person name="Mangenot S."/>
            <person name="Martinez-Jehanne V."/>
            <person name="Matic I."/>
            <person name="Nassif X."/>
            <person name="Oztas S."/>
            <person name="Petit M.A."/>
            <person name="Pichon C."/>
            <person name="Rouy Z."/>
            <person name="Ruf C.S."/>
            <person name="Schneider D."/>
            <person name="Tourret J."/>
            <person name="Vacherie B."/>
            <person name="Vallenet D."/>
            <person name="Medigue C."/>
            <person name="Rocha E.P.C."/>
            <person name="Denamur E."/>
        </authorList>
    </citation>
    <scope>NUCLEOTIDE SEQUENCE [LARGE SCALE GENOMIC DNA]</scope>
    <source>
        <strain>S88 / ExPEC</strain>
    </source>
</reference>
<gene>
    <name evidence="1" type="primary">nadA</name>
    <name type="ordered locus">ECS88_0766</name>
</gene>
<evidence type="ECO:0000255" key="1">
    <source>
        <dbReference type="HAMAP-Rule" id="MF_00567"/>
    </source>
</evidence>
<keyword id="KW-0004">4Fe-4S</keyword>
<keyword id="KW-0963">Cytoplasm</keyword>
<keyword id="KW-0408">Iron</keyword>
<keyword id="KW-0411">Iron-sulfur</keyword>
<keyword id="KW-0479">Metal-binding</keyword>
<keyword id="KW-0662">Pyridine nucleotide biosynthesis</keyword>
<keyword id="KW-1185">Reference proteome</keyword>
<keyword id="KW-0808">Transferase</keyword>
<sequence>MSVMFDPDTAIYPFPPKPTPLSIDEKAYYREKIKRLLKERNAVMVAHYYTDPEIQQLAEETGGCISDSLEMARFGAKHPASTLLVAGVRFMGETAKILSPEKTILMPTLQAECSLDLGCPVEEFNAFCDAHPDRTVVVYANTSAAVKARADWVVTSSIAVELIDHLDSLGEKIIWAPDKHLGCYVQKQTGADILCWQGACIVHDEFKTQALTRLQEEYPDAAILVHPESPQAIVEMADAVGSTSQLIAAAKTLPHQRLIVATDRGIFYKMQQAVPDKELLEAPTAGEGATCRSCAHCPWMAMNGLQAIAEALELEGSNHEVYVDERLLERALVPLNRMLDFAATLRG</sequence>
<dbReference type="EC" id="2.5.1.72" evidence="1"/>
<dbReference type="EMBL" id="CU928161">
    <property type="protein sequence ID" value="CAR02105.1"/>
    <property type="molecule type" value="Genomic_DNA"/>
</dbReference>
<dbReference type="RefSeq" id="WP_000115276.1">
    <property type="nucleotide sequence ID" value="NC_011742.1"/>
</dbReference>
<dbReference type="SMR" id="B7MGK7"/>
<dbReference type="KEGG" id="ecz:ECS88_0766"/>
<dbReference type="HOGENOM" id="CLU_047382_1_0_6"/>
<dbReference type="UniPathway" id="UPA00253">
    <property type="reaction ID" value="UER00327"/>
</dbReference>
<dbReference type="Proteomes" id="UP000000747">
    <property type="component" value="Chromosome"/>
</dbReference>
<dbReference type="GO" id="GO:0005829">
    <property type="term" value="C:cytosol"/>
    <property type="evidence" value="ECO:0007669"/>
    <property type="project" value="TreeGrafter"/>
</dbReference>
<dbReference type="GO" id="GO:0051539">
    <property type="term" value="F:4 iron, 4 sulfur cluster binding"/>
    <property type="evidence" value="ECO:0007669"/>
    <property type="project" value="UniProtKB-KW"/>
</dbReference>
<dbReference type="GO" id="GO:0046872">
    <property type="term" value="F:metal ion binding"/>
    <property type="evidence" value="ECO:0007669"/>
    <property type="project" value="UniProtKB-KW"/>
</dbReference>
<dbReference type="GO" id="GO:0008987">
    <property type="term" value="F:quinolinate synthetase A activity"/>
    <property type="evidence" value="ECO:0007669"/>
    <property type="project" value="UniProtKB-UniRule"/>
</dbReference>
<dbReference type="GO" id="GO:0034628">
    <property type="term" value="P:'de novo' NAD biosynthetic process from L-aspartate"/>
    <property type="evidence" value="ECO:0007669"/>
    <property type="project" value="TreeGrafter"/>
</dbReference>
<dbReference type="FunFam" id="3.40.50.10800:FF:000001">
    <property type="entry name" value="Quinolinate synthase A"/>
    <property type="match status" value="1"/>
</dbReference>
<dbReference type="FunFam" id="3.40.50.10800:FF:000003">
    <property type="entry name" value="Quinolinate synthase A"/>
    <property type="match status" value="1"/>
</dbReference>
<dbReference type="Gene3D" id="3.40.50.10800">
    <property type="entry name" value="NadA-like"/>
    <property type="match status" value="3"/>
</dbReference>
<dbReference type="HAMAP" id="MF_00567">
    <property type="entry name" value="NadA_type1"/>
    <property type="match status" value="1"/>
</dbReference>
<dbReference type="InterPro" id="IPR003473">
    <property type="entry name" value="NadA"/>
</dbReference>
<dbReference type="InterPro" id="IPR036094">
    <property type="entry name" value="NadA_sf"/>
</dbReference>
<dbReference type="InterPro" id="IPR023513">
    <property type="entry name" value="Quinolinate_synth_A_type1"/>
</dbReference>
<dbReference type="NCBIfam" id="TIGR00550">
    <property type="entry name" value="nadA"/>
    <property type="match status" value="1"/>
</dbReference>
<dbReference type="NCBIfam" id="NF006877">
    <property type="entry name" value="PRK09375.1-1"/>
    <property type="match status" value="1"/>
</dbReference>
<dbReference type="NCBIfam" id="NF006878">
    <property type="entry name" value="PRK09375.1-2"/>
    <property type="match status" value="1"/>
</dbReference>
<dbReference type="PANTHER" id="PTHR30573:SF0">
    <property type="entry name" value="QUINOLINATE SYNTHASE, CHLOROPLASTIC"/>
    <property type="match status" value="1"/>
</dbReference>
<dbReference type="PANTHER" id="PTHR30573">
    <property type="entry name" value="QUINOLINATE SYNTHETASE A"/>
    <property type="match status" value="1"/>
</dbReference>
<dbReference type="Pfam" id="PF02445">
    <property type="entry name" value="NadA"/>
    <property type="match status" value="1"/>
</dbReference>
<dbReference type="SUPFAM" id="SSF142754">
    <property type="entry name" value="NadA-like"/>
    <property type="match status" value="1"/>
</dbReference>